<comment type="function">
    <text>This is the major myelin protein from the central nervous system. It plays an important role in the formation or maintenance of the multilamellar structure of myelin.</text>
</comment>
<comment type="subunit">
    <text evidence="3">Interacts with MAL.</text>
</comment>
<comment type="subcellular location">
    <subcellularLocation>
        <location>Cell membrane</location>
        <topology>Multi-pass membrane protein</topology>
    </subcellularLocation>
    <subcellularLocation>
        <location evidence="1">Myelin membrane</location>
    </subcellularLocation>
    <text evidence="1">Colocalizes with SIRT2 in internodal regions, at paranodal axoglial junction and Schmidt-Lanterman incisures of myelin sheat.</text>
</comment>
<comment type="disease">
    <text>Defects in Plp1 are the cause of the dysmyelinating disease MD.</text>
</comment>
<comment type="similarity">
    <text evidence="7">Belongs to the myelin proteolipid protein family.</text>
</comment>
<gene>
    <name type="primary">Plp1</name>
    <name type="synonym">Plp</name>
</gene>
<protein>
    <recommendedName>
        <fullName>Myelin proteolipid protein</fullName>
        <shortName>PLP</shortName>
    </recommendedName>
    <alternativeName>
        <fullName>Lipophilin</fullName>
    </alternativeName>
</protein>
<accession>P60203</accession>
<accession>P04400</accession>
<accession>P06905</accession>
<accession>Q561K5</accession>
<dbReference type="EMBL" id="X02809">
    <property type="protein sequence ID" value="CAA26577.1"/>
    <property type="molecule type" value="mRNA"/>
</dbReference>
<dbReference type="EMBL" id="M11185">
    <property type="protein sequence ID" value="AAA41898.1"/>
    <property type="molecule type" value="mRNA"/>
</dbReference>
<dbReference type="EMBL" id="BC093596">
    <property type="protein sequence ID" value="AAH93596.1"/>
    <property type="molecule type" value="mRNA"/>
</dbReference>
<dbReference type="PIR" id="I52775">
    <property type="entry name" value="MPRTPL"/>
</dbReference>
<dbReference type="RefSeq" id="NP_112252.1">
    <property type="nucleotide sequence ID" value="NM_030990.3"/>
</dbReference>
<dbReference type="RefSeq" id="XP_017457402.1">
    <property type="nucleotide sequence ID" value="XM_017601913.3"/>
</dbReference>
<dbReference type="RefSeq" id="XP_063135877.1">
    <property type="nucleotide sequence ID" value="XM_063279807.1"/>
</dbReference>
<dbReference type="RefSeq" id="XP_063135878.1">
    <property type="nucleotide sequence ID" value="XM_063279808.1"/>
</dbReference>
<dbReference type="RefSeq" id="XP_063135879.1">
    <property type="nucleotide sequence ID" value="XM_063279809.1"/>
</dbReference>
<dbReference type="SMR" id="P60203"/>
<dbReference type="BioGRID" id="247046">
    <property type="interactions" value="3"/>
</dbReference>
<dbReference type="CORUM" id="P60203"/>
<dbReference type="FunCoup" id="P60203">
    <property type="interactions" value="121"/>
</dbReference>
<dbReference type="IntAct" id="P60203">
    <property type="interactions" value="3"/>
</dbReference>
<dbReference type="MINT" id="P60203"/>
<dbReference type="STRING" id="10116.ENSRNOP00000003283"/>
<dbReference type="iPTMnet" id="P60203"/>
<dbReference type="PhosphoSitePlus" id="P60203"/>
<dbReference type="SwissPalm" id="P60203"/>
<dbReference type="PaxDb" id="10116-ENSRNOP00000003283"/>
<dbReference type="Ensembl" id="ENSRNOT00000003283.7">
    <property type="protein sequence ID" value="ENSRNOP00000003283.4"/>
    <property type="gene ID" value="ENSRNOG00000002419.7"/>
</dbReference>
<dbReference type="GeneID" id="24943"/>
<dbReference type="KEGG" id="rno:24943"/>
<dbReference type="UCSC" id="RGD:3354">
    <property type="organism name" value="rat"/>
</dbReference>
<dbReference type="AGR" id="RGD:3354"/>
<dbReference type="CTD" id="5354"/>
<dbReference type="RGD" id="3354">
    <property type="gene designation" value="Plp1"/>
</dbReference>
<dbReference type="eggNOG" id="KOG4800">
    <property type="taxonomic scope" value="Eukaryota"/>
</dbReference>
<dbReference type="GeneTree" id="ENSGT00390000006915"/>
<dbReference type="HOGENOM" id="CLU_064167_2_1_1"/>
<dbReference type="InParanoid" id="P60203"/>
<dbReference type="OMA" id="AVCKTRE"/>
<dbReference type="OrthoDB" id="9993736at2759"/>
<dbReference type="PhylomeDB" id="P60203"/>
<dbReference type="TreeFam" id="TF315162"/>
<dbReference type="PRO" id="PR:P60203"/>
<dbReference type="Proteomes" id="UP000002494">
    <property type="component" value="Chromosome X"/>
</dbReference>
<dbReference type="Bgee" id="ENSRNOG00000002419">
    <property type="expression patterns" value="Expressed in Ammon's horn and 20 other cell types or tissues"/>
</dbReference>
<dbReference type="GO" id="GO:0034683">
    <property type="term" value="C:integrin alphav-beta3 complex"/>
    <property type="evidence" value="ECO:0000314"/>
    <property type="project" value="RGD"/>
</dbReference>
<dbReference type="GO" id="GO:0043209">
    <property type="term" value="C:myelin sheath"/>
    <property type="evidence" value="ECO:0000314"/>
    <property type="project" value="UniProtKB"/>
</dbReference>
<dbReference type="GO" id="GO:0005886">
    <property type="term" value="C:plasma membrane"/>
    <property type="evidence" value="ECO:0000250"/>
    <property type="project" value="UniProtKB"/>
</dbReference>
<dbReference type="GO" id="GO:0044877">
    <property type="term" value="F:protein-containing complex binding"/>
    <property type="evidence" value="ECO:0000353"/>
    <property type="project" value="RGD"/>
</dbReference>
<dbReference type="GO" id="GO:0019911">
    <property type="term" value="F:structural constituent of myelin sheath"/>
    <property type="evidence" value="ECO:0000315"/>
    <property type="project" value="RGD"/>
</dbReference>
<dbReference type="GO" id="GO:0098990">
    <property type="term" value="P:AMPA selective glutamate receptor signaling pathway"/>
    <property type="evidence" value="ECO:0000315"/>
    <property type="project" value="RGD"/>
</dbReference>
<dbReference type="GO" id="GO:0014002">
    <property type="term" value="P:astrocyte development"/>
    <property type="evidence" value="ECO:0000266"/>
    <property type="project" value="RGD"/>
</dbReference>
<dbReference type="GO" id="GO:0061564">
    <property type="term" value="P:axon development"/>
    <property type="evidence" value="ECO:0000266"/>
    <property type="project" value="RGD"/>
</dbReference>
<dbReference type="GO" id="GO:0008366">
    <property type="term" value="P:axon ensheathment"/>
    <property type="evidence" value="ECO:0000266"/>
    <property type="project" value="RGD"/>
</dbReference>
<dbReference type="GO" id="GO:0022010">
    <property type="term" value="P:central nervous system myelination"/>
    <property type="evidence" value="ECO:0000266"/>
    <property type="project" value="RGD"/>
</dbReference>
<dbReference type="GO" id="GO:0010001">
    <property type="term" value="P:glial cell differentiation"/>
    <property type="evidence" value="ECO:0000315"/>
    <property type="project" value="RGD"/>
</dbReference>
<dbReference type="GO" id="GO:0006954">
    <property type="term" value="P:inflammatory response"/>
    <property type="evidence" value="ECO:0000266"/>
    <property type="project" value="RGD"/>
</dbReference>
<dbReference type="GO" id="GO:0042759">
    <property type="term" value="P:long-chain fatty acid biosynthetic process"/>
    <property type="evidence" value="ECO:0000266"/>
    <property type="project" value="RGD"/>
</dbReference>
<dbReference type="GO" id="GO:0042552">
    <property type="term" value="P:myelination"/>
    <property type="evidence" value="ECO:0000315"/>
    <property type="project" value="RGD"/>
</dbReference>
<dbReference type="GO" id="GO:1904427">
    <property type="term" value="P:positive regulation of calcium ion transmembrane transport"/>
    <property type="evidence" value="ECO:0000315"/>
    <property type="project" value="RGD"/>
</dbReference>
<dbReference type="GO" id="GO:0030335">
    <property type="term" value="P:positive regulation of cell migration"/>
    <property type="evidence" value="ECO:0000315"/>
    <property type="project" value="RGD"/>
</dbReference>
<dbReference type="GO" id="GO:0010628">
    <property type="term" value="P:positive regulation of gene expression"/>
    <property type="evidence" value="ECO:0000266"/>
    <property type="project" value="RGD"/>
</dbReference>
<dbReference type="InterPro" id="IPR001614">
    <property type="entry name" value="Myelin_PLP"/>
</dbReference>
<dbReference type="InterPro" id="IPR018237">
    <property type="entry name" value="Myelin_PLP_CS"/>
</dbReference>
<dbReference type="PANTHER" id="PTHR11683">
    <property type="entry name" value="MYELIN PROTEOLIPID"/>
    <property type="match status" value="1"/>
</dbReference>
<dbReference type="PANTHER" id="PTHR11683:SF11">
    <property type="entry name" value="MYELIN PROTEOLIPID PROTEIN"/>
    <property type="match status" value="1"/>
</dbReference>
<dbReference type="Pfam" id="PF01275">
    <property type="entry name" value="Myelin_PLP"/>
    <property type="match status" value="1"/>
</dbReference>
<dbReference type="PRINTS" id="PR00214">
    <property type="entry name" value="MYELINPLP"/>
</dbReference>
<dbReference type="SMART" id="SM00002">
    <property type="entry name" value="PLP"/>
    <property type="match status" value="1"/>
</dbReference>
<dbReference type="PROSITE" id="PS00575">
    <property type="entry name" value="MYELIN_PLP_1"/>
    <property type="match status" value="1"/>
</dbReference>
<dbReference type="PROSITE" id="PS01004">
    <property type="entry name" value="MYELIN_PLP_2"/>
    <property type="match status" value="1"/>
</dbReference>
<sequence length="277" mass="30077">MGLLECCARCLVGAPFASLVATGLCFFGVALFCGCGHEALTGTEKLIETYFSKNYQDYEYLINVIHAFQYVIYGTASFFFLYGALLLAEGFYTTGAVRQIFGDYKTTICGKGLSATVTGGQKGRGSRGQHQAHSLERVCHCLGKWLGHPDKFVGITYALTVVWLLVFACSAVPVYIYFNTWTTCQSIAFPSKTSASIGSLCADARMYGVLPWNAFPGKVCGSNLLSICKTAEFQMTFHLFIAAFVGAAATLVSLLTFMIAATYNFAVLKLMGRGTKF</sequence>
<organism>
    <name type="scientific">Rattus norvegicus</name>
    <name type="common">Rat</name>
    <dbReference type="NCBI Taxonomy" id="10116"/>
    <lineage>
        <taxon>Eukaryota</taxon>
        <taxon>Metazoa</taxon>
        <taxon>Chordata</taxon>
        <taxon>Craniata</taxon>
        <taxon>Vertebrata</taxon>
        <taxon>Euteleostomi</taxon>
        <taxon>Mammalia</taxon>
        <taxon>Eutheria</taxon>
        <taxon>Euarchontoglires</taxon>
        <taxon>Glires</taxon>
        <taxon>Rodentia</taxon>
        <taxon>Myomorpha</taxon>
        <taxon>Muroidea</taxon>
        <taxon>Muridae</taxon>
        <taxon>Murinae</taxon>
        <taxon>Rattus</taxon>
    </lineage>
</organism>
<name>MYPR_RAT</name>
<reference key="1">
    <citation type="journal article" date="1985" name="FEBS Lett.">
        <title>Molecular cloning and nucleotide sequence of a cDNA clone coding for rat brain myelin proteolipid.</title>
        <authorList>
            <person name="Dautigny A."/>
            <person name="Alliel P.M."/>
            <person name="D'Auriol L."/>
            <person name="Pham Dinh D."/>
            <person name="Nussbaum J.-L."/>
            <person name="Galibert F."/>
            <person name="Jolles P."/>
        </authorList>
    </citation>
    <scope>NUCLEOTIDE SEQUENCE [MRNA]</scope>
</reference>
<reference key="2">
    <citation type="journal article" date="1985" name="Cell">
        <title>Nucleotide sequences of two mRNAs for rat brain myelin proteolipid protein.</title>
        <authorList>
            <person name="Milner R.J."/>
            <person name="Lai C."/>
            <person name="Nave K.-A."/>
            <person name="Lenoir D."/>
            <person name="Ogata J."/>
            <person name="Sutcliffe J.G."/>
        </authorList>
    </citation>
    <scope>NUCLEOTIDE SEQUENCE [MRNA]</scope>
</reference>
<reference key="3">
    <citation type="journal article" date="2004" name="Genome Res.">
        <title>The status, quality, and expansion of the NIH full-length cDNA project: the Mammalian Gene Collection (MGC).</title>
        <authorList>
            <consortium name="The MGC Project Team"/>
        </authorList>
    </citation>
    <scope>NUCLEOTIDE SEQUENCE [LARGE SCALE MRNA]</scope>
    <source>
        <tissue>Brain</tissue>
    </source>
</reference>
<reference key="4">
    <citation type="submission" date="2007-07" db="UniProtKB">
        <authorList>
            <person name="Lubec G."/>
            <person name="Kang S.U."/>
        </authorList>
    </citation>
    <scope>PROTEIN SEQUENCE OF 2-9; 46-53; 99-105; 112-122; 145-151 AND 193-229</scope>
    <scope>PALMITOYLATION AT SER-199</scope>
    <scope>IDENTIFICATION BY MASS SPECTROMETRY</scope>
    <source>
        <strain>Sprague-Dawley</strain>
        <tissue>Brain</tissue>
    </source>
</reference>
<reference key="5">
    <citation type="journal article" date="2012" name="Nat. Commun.">
        <title>Quantitative maps of protein phosphorylation sites across 14 different rat organs and tissues.</title>
        <authorList>
            <person name="Lundby A."/>
            <person name="Secher A."/>
            <person name="Lage K."/>
            <person name="Nordsborg N.B."/>
            <person name="Dmytriyev A."/>
            <person name="Lundby C."/>
            <person name="Olsen J.V."/>
        </authorList>
    </citation>
    <scope>PHOSPHORYLATION [LARGE SCALE ANALYSIS] AT SER-114; THR-116 AND THR-118</scope>
    <scope>IDENTIFICATION BY MASS SPECTROMETRY [LARGE SCALE ANALYSIS]</scope>
</reference>
<reference key="6">
    <citation type="journal article" date="1989" name="EMBO J.">
        <title>Myelin-deficient rat: a point mutation in exon III (A--&gt;C, Thr75--&gt;Pro) of the myelin proteolipid protein causes dysmyelination and oligodendrocyte death.</title>
        <authorList>
            <person name="Boison D."/>
            <person name="Stoffel W."/>
        </authorList>
    </citation>
    <scope>VARIANT MD PRO-75</scope>
</reference>
<reference key="7">
    <citation type="journal article" date="1990" name="Ann. N. Y. Acad. Sci.">
        <title>Single base substitution in codon 74 of the MD rat myelin proteolipid protein gene.</title>
        <authorList>
            <person name="Simons R."/>
            <person name="Riordan J.R."/>
        </authorList>
    </citation>
    <scope>VARIANT MD PRO-75</scope>
</reference>
<reference key="8">
    <citation type="journal article" date="1990" name="J. Neurochem.">
        <title>The myelin-deficient rat has a single base substitution in the third exon of the myelin proteolipid protein gene.</title>
        <authorList>
            <person name="Simons R."/>
            <person name="Riordan J.R."/>
        </authorList>
    </citation>
    <scope>VARIANT MD PRO-75</scope>
</reference>
<feature type="initiator methionine" description="Removed" evidence="2">
    <location>
        <position position="1"/>
    </location>
</feature>
<feature type="chain" id="PRO_0000159008" description="Myelin proteolipid protein">
    <location>
        <begin position="2"/>
        <end position="277"/>
    </location>
</feature>
<feature type="topological domain" description="Cytoplasmic" evidence="7">
    <location>
        <begin position="2"/>
        <end position="9"/>
    </location>
</feature>
<feature type="transmembrane region" description="Helical; Name=1" evidence="7">
    <location>
        <begin position="10"/>
        <end position="36"/>
    </location>
</feature>
<feature type="topological domain" description="Extracellular" evidence="7">
    <location>
        <begin position="37"/>
        <end position="63"/>
    </location>
</feature>
<feature type="transmembrane region" description="Helical; Name=2" evidence="7">
    <location>
        <begin position="64"/>
        <end position="88"/>
    </location>
</feature>
<feature type="topological domain" description="Cytoplasmic" evidence="7">
    <location>
        <begin position="89"/>
        <end position="151"/>
    </location>
</feature>
<feature type="transmembrane region" description="Helical; Name=3" evidence="7">
    <location>
        <begin position="152"/>
        <end position="177"/>
    </location>
</feature>
<feature type="topological domain" description="Extracellular" evidence="7">
    <location>
        <begin position="178"/>
        <end position="233"/>
    </location>
</feature>
<feature type="transmembrane region" description="Helical; Name=4" evidence="7">
    <location>
        <begin position="234"/>
        <end position="260"/>
    </location>
</feature>
<feature type="topological domain" description="Cytoplasmic" evidence="7">
    <location>
        <begin position="261"/>
        <end position="277"/>
    </location>
</feature>
<feature type="modified residue" description="Phosphoserine" evidence="9">
    <location>
        <position position="114"/>
    </location>
</feature>
<feature type="modified residue" description="Phosphothreonine" evidence="9">
    <location>
        <position position="116"/>
    </location>
</feature>
<feature type="modified residue" description="Phosphothreonine" evidence="9">
    <location>
        <position position="118"/>
    </location>
</feature>
<feature type="lipid moiety-binding region" description="S-palmitoyl cysteine" evidence="1">
    <location>
        <position position="6"/>
    </location>
</feature>
<feature type="lipid moiety-binding region" description="S-palmitoyl cysteine" evidence="1">
    <location>
        <position position="7"/>
    </location>
</feature>
<feature type="lipid moiety-binding region" description="S-palmitoyl cysteine" evidence="1">
    <location>
        <position position="10"/>
    </location>
</feature>
<feature type="lipid moiety-binding region" description="S-palmitoyl cysteine" evidence="1">
    <location>
        <position position="109"/>
    </location>
</feature>
<feature type="lipid moiety-binding region" description="S-palmitoyl cysteine" evidence="1">
    <location>
        <position position="139"/>
    </location>
</feature>
<feature type="lipid moiety-binding region" description="S-palmitoyl cysteine" evidence="1">
    <location>
        <position position="141"/>
    </location>
</feature>
<feature type="lipid moiety-binding region" description="O-palmitoyl serine" evidence="8">
    <location>
        <position position="199"/>
    </location>
</feature>
<feature type="disulfide bond" evidence="1">
    <location>
        <begin position="184"/>
        <end position="228"/>
    </location>
</feature>
<feature type="disulfide bond" evidence="1">
    <location>
        <begin position="201"/>
        <end position="220"/>
    </location>
</feature>
<feature type="sequence variant" description="In MD." evidence="4 5 6">
    <original>T</original>
    <variation>P</variation>
    <location>
        <position position="75"/>
    </location>
</feature>
<keyword id="KW-1003">Cell membrane</keyword>
<keyword id="KW-0903">Direct protein sequencing</keyword>
<keyword id="KW-0225">Disease variant</keyword>
<keyword id="KW-1015">Disulfide bond</keyword>
<keyword id="KW-0449">Lipoprotein</keyword>
<keyword id="KW-0472">Membrane</keyword>
<keyword id="KW-0564">Palmitate</keyword>
<keyword id="KW-0597">Phosphoprotein</keyword>
<keyword id="KW-1185">Reference proteome</keyword>
<keyword id="KW-0812">Transmembrane</keyword>
<keyword id="KW-1133">Transmembrane helix</keyword>
<evidence type="ECO:0000250" key="1"/>
<evidence type="ECO:0000250" key="2">
    <source>
        <dbReference type="UniProtKB" id="P04116"/>
    </source>
</evidence>
<evidence type="ECO:0000250" key="3">
    <source>
        <dbReference type="UniProtKB" id="P60201"/>
    </source>
</evidence>
<evidence type="ECO:0000269" key="4">
    <source>
    </source>
</evidence>
<evidence type="ECO:0000269" key="5">
    <source>
    </source>
</evidence>
<evidence type="ECO:0000269" key="6">
    <source>
    </source>
</evidence>
<evidence type="ECO:0000305" key="7"/>
<evidence type="ECO:0000305" key="8">
    <source ref="4"/>
</evidence>
<evidence type="ECO:0007744" key="9">
    <source>
    </source>
</evidence>
<proteinExistence type="evidence at protein level"/>